<accession>B6ISM1</accession>
<proteinExistence type="inferred from homology"/>
<reference key="1">
    <citation type="submission" date="2007-03" db="EMBL/GenBank/DDBJ databases">
        <title>Genome sequence of Rhodospirillum centenum.</title>
        <authorList>
            <person name="Touchman J.W."/>
            <person name="Bauer C."/>
            <person name="Blankenship R.E."/>
        </authorList>
    </citation>
    <scope>NUCLEOTIDE SEQUENCE [LARGE SCALE GENOMIC DNA]</scope>
    <source>
        <strain>ATCC 51521 / SW</strain>
    </source>
</reference>
<feature type="chain" id="PRO_1000098114" description="Serine--tRNA ligase">
    <location>
        <begin position="1"/>
        <end position="424"/>
    </location>
</feature>
<feature type="binding site" evidence="1">
    <location>
        <begin position="228"/>
        <end position="230"/>
    </location>
    <ligand>
        <name>L-serine</name>
        <dbReference type="ChEBI" id="CHEBI:33384"/>
    </ligand>
</feature>
<feature type="binding site" evidence="1">
    <location>
        <begin position="259"/>
        <end position="261"/>
    </location>
    <ligand>
        <name>ATP</name>
        <dbReference type="ChEBI" id="CHEBI:30616"/>
    </ligand>
</feature>
<feature type="binding site" evidence="1">
    <location>
        <position position="282"/>
    </location>
    <ligand>
        <name>L-serine</name>
        <dbReference type="ChEBI" id="CHEBI:33384"/>
    </ligand>
</feature>
<feature type="binding site" evidence="1">
    <location>
        <begin position="346"/>
        <end position="349"/>
    </location>
    <ligand>
        <name>ATP</name>
        <dbReference type="ChEBI" id="CHEBI:30616"/>
    </ligand>
</feature>
<feature type="binding site" evidence="1">
    <location>
        <position position="382"/>
    </location>
    <ligand>
        <name>L-serine</name>
        <dbReference type="ChEBI" id="CHEBI:33384"/>
    </ligand>
</feature>
<protein>
    <recommendedName>
        <fullName evidence="1">Serine--tRNA ligase</fullName>
        <ecNumber evidence="1">6.1.1.11</ecNumber>
    </recommendedName>
    <alternativeName>
        <fullName evidence="1">Seryl-tRNA synthetase</fullName>
        <shortName evidence="1">SerRS</shortName>
    </alternativeName>
    <alternativeName>
        <fullName evidence="1">Seryl-tRNA(Ser/Sec) synthetase</fullName>
    </alternativeName>
</protein>
<comment type="function">
    <text evidence="1">Catalyzes the attachment of serine to tRNA(Ser). Is also able to aminoacylate tRNA(Sec) with serine, to form the misacylated tRNA L-seryl-tRNA(Sec), which will be further converted into selenocysteinyl-tRNA(Sec).</text>
</comment>
<comment type="catalytic activity">
    <reaction evidence="1">
        <text>tRNA(Ser) + L-serine + ATP = L-seryl-tRNA(Ser) + AMP + diphosphate + H(+)</text>
        <dbReference type="Rhea" id="RHEA:12292"/>
        <dbReference type="Rhea" id="RHEA-COMP:9669"/>
        <dbReference type="Rhea" id="RHEA-COMP:9703"/>
        <dbReference type="ChEBI" id="CHEBI:15378"/>
        <dbReference type="ChEBI" id="CHEBI:30616"/>
        <dbReference type="ChEBI" id="CHEBI:33019"/>
        <dbReference type="ChEBI" id="CHEBI:33384"/>
        <dbReference type="ChEBI" id="CHEBI:78442"/>
        <dbReference type="ChEBI" id="CHEBI:78533"/>
        <dbReference type="ChEBI" id="CHEBI:456215"/>
        <dbReference type="EC" id="6.1.1.11"/>
    </reaction>
</comment>
<comment type="catalytic activity">
    <reaction evidence="1">
        <text>tRNA(Sec) + L-serine + ATP = L-seryl-tRNA(Sec) + AMP + diphosphate + H(+)</text>
        <dbReference type="Rhea" id="RHEA:42580"/>
        <dbReference type="Rhea" id="RHEA-COMP:9742"/>
        <dbReference type="Rhea" id="RHEA-COMP:10128"/>
        <dbReference type="ChEBI" id="CHEBI:15378"/>
        <dbReference type="ChEBI" id="CHEBI:30616"/>
        <dbReference type="ChEBI" id="CHEBI:33019"/>
        <dbReference type="ChEBI" id="CHEBI:33384"/>
        <dbReference type="ChEBI" id="CHEBI:78442"/>
        <dbReference type="ChEBI" id="CHEBI:78533"/>
        <dbReference type="ChEBI" id="CHEBI:456215"/>
        <dbReference type="EC" id="6.1.1.11"/>
    </reaction>
</comment>
<comment type="pathway">
    <text evidence="1">Aminoacyl-tRNA biosynthesis; selenocysteinyl-tRNA(Sec) biosynthesis; L-seryl-tRNA(Sec) from L-serine and tRNA(Sec): step 1/1.</text>
</comment>
<comment type="subunit">
    <text evidence="1">Homodimer. The tRNA molecule binds across the dimer.</text>
</comment>
<comment type="subcellular location">
    <subcellularLocation>
        <location evidence="1">Cytoplasm</location>
    </subcellularLocation>
</comment>
<comment type="domain">
    <text evidence="1">Consists of two distinct domains, a catalytic core and a N-terminal extension that is involved in tRNA binding.</text>
</comment>
<comment type="similarity">
    <text evidence="1">Belongs to the class-II aminoacyl-tRNA synthetase family. Type-1 seryl-tRNA synthetase subfamily.</text>
</comment>
<name>SYS_RHOCS</name>
<keyword id="KW-0030">Aminoacyl-tRNA synthetase</keyword>
<keyword id="KW-0067">ATP-binding</keyword>
<keyword id="KW-0963">Cytoplasm</keyword>
<keyword id="KW-0436">Ligase</keyword>
<keyword id="KW-0547">Nucleotide-binding</keyword>
<keyword id="KW-0648">Protein biosynthesis</keyword>
<keyword id="KW-1185">Reference proteome</keyword>
<evidence type="ECO:0000255" key="1">
    <source>
        <dbReference type="HAMAP-Rule" id="MF_00176"/>
    </source>
</evidence>
<gene>
    <name evidence="1" type="primary">serS</name>
    <name type="ordered locus">RC1_1034</name>
</gene>
<sequence length="424" mass="46721">MHDLRAIRDNPEAFDTGLARRGLPPASAAILDLDQRRRAAQTSFQECQARRNEASRLIGAYKKDGKDAQPLLDEVAALKERIPALEEEDRRLGAELDALLAALPNLPAADVPEGKDEHDNVEIRRVGTPRDIPGAKQHFELGEALGLMDFEGAARMSGARFTVLKGQLARLERALGDFMLDLHTREFGYTEVSPPLLVRDEAVFGTGQLPKFADDLFRTTTGHWLIPTAEVTLTNLANDSIIDAEALPWRLTARTPCFRSEAGSAGKDTRGMIRQHQFMKVELVSITLPEQSEAEHERMTKAAETVLERLGLPFRTVVLCTGDMGFSARKTYDIEVWLPGQGAYREISSCSNCGDFQARRMKARSRPKGEKGTQVVHTLNGSGVAVGRALIAVMENYQQPDGSILVPEALRPYMGGQERITAHG</sequence>
<dbReference type="EC" id="6.1.1.11" evidence="1"/>
<dbReference type="EMBL" id="CP000613">
    <property type="protein sequence ID" value="ACI98457.1"/>
    <property type="molecule type" value="Genomic_DNA"/>
</dbReference>
<dbReference type="RefSeq" id="WP_012566246.1">
    <property type="nucleotide sequence ID" value="NC_011420.2"/>
</dbReference>
<dbReference type="SMR" id="B6ISM1"/>
<dbReference type="STRING" id="414684.RC1_1034"/>
<dbReference type="KEGG" id="rce:RC1_1034"/>
<dbReference type="eggNOG" id="COG0172">
    <property type="taxonomic scope" value="Bacteria"/>
</dbReference>
<dbReference type="HOGENOM" id="CLU_023797_1_1_5"/>
<dbReference type="OrthoDB" id="9804647at2"/>
<dbReference type="UniPathway" id="UPA00906">
    <property type="reaction ID" value="UER00895"/>
</dbReference>
<dbReference type="Proteomes" id="UP000001591">
    <property type="component" value="Chromosome"/>
</dbReference>
<dbReference type="GO" id="GO:0005737">
    <property type="term" value="C:cytoplasm"/>
    <property type="evidence" value="ECO:0007669"/>
    <property type="project" value="UniProtKB-SubCell"/>
</dbReference>
<dbReference type="GO" id="GO:0005524">
    <property type="term" value="F:ATP binding"/>
    <property type="evidence" value="ECO:0007669"/>
    <property type="project" value="UniProtKB-UniRule"/>
</dbReference>
<dbReference type="GO" id="GO:0004828">
    <property type="term" value="F:serine-tRNA ligase activity"/>
    <property type="evidence" value="ECO:0007669"/>
    <property type="project" value="UniProtKB-UniRule"/>
</dbReference>
<dbReference type="GO" id="GO:0016260">
    <property type="term" value="P:selenocysteine biosynthetic process"/>
    <property type="evidence" value="ECO:0007669"/>
    <property type="project" value="UniProtKB-UniRule"/>
</dbReference>
<dbReference type="GO" id="GO:0006434">
    <property type="term" value="P:seryl-tRNA aminoacylation"/>
    <property type="evidence" value="ECO:0007669"/>
    <property type="project" value="UniProtKB-UniRule"/>
</dbReference>
<dbReference type="CDD" id="cd00770">
    <property type="entry name" value="SerRS_core"/>
    <property type="match status" value="1"/>
</dbReference>
<dbReference type="Gene3D" id="3.30.930.10">
    <property type="entry name" value="Bira Bifunctional Protein, Domain 2"/>
    <property type="match status" value="1"/>
</dbReference>
<dbReference type="Gene3D" id="1.10.287.40">
    <property type="entry name" value="Serine-tRNA synthetase, tRNA binding domain"/>
    <property type="match status" value="1"/>
</dbReference>
<dbReference type="HAMAP" id="MF_00176">
    <property type="entry name" value="Ser_tRNA_synth_type1"/>
    <property type="match status" value="1"/>
</dbReference>
<dbReference type="InterPro" id="IPR002314">
    <property type="entry name" value="aa-tRNA-synt_IIb"/>
</dbReference>
<dbReference type="InterPro" id="IPR006195">
    <property type="entry name" value="aa-tRNA-synth_II"/>
</dbReference>
<dbReference type="InterPro" id="IPR045864">
    <property type="entry name" value="aa-tRNA-synth_II/BPL/LPL"/>
</dbReference>
<dbReference type="InterPro" id="IPR002317">
    <property type="entry name" value="Ser-tRNA-ligase_type_1"/>
</dbReference>
<dbReference type="InterPro" id="IPR015866">
    <property type="entry name" value="Ser-tRNA-synth_1_N"/>
</dbReference>
<dbReference type="InterPro" id="IPR042103">
    <property type="entry name" value="SerRS_1_N_sf"/>
</dbReference>
<dbReference type="InterPro" id="IPR033729">
    <property type="entry name" value="SerRS_core"/>
</dbReference>
<dbReference type="InterPro" id="IPR010978">
    <property type="entry name" value="tRNA-bd_arm"/>
</dbReference>
<dbReference type="NCBIfam" id="TIGR00414">
    <property type="entry name" value="serS"/>
    <property type="match status" value="1"/>
</dbReference>
<dbReference type="PANTHER" id="PTHR43697:SF1">
    <property type="entry name" value="SERINE--TRNA LIGASE"/>
    <property type="match status" value="1"/>
</dbReference>
<dbReference type="PANTHER" id="PTHR43697">
    <property type="entry name" value="SERYL-TRNA SYNTHETASE"/>
    <property type="match status" value="1"/>
</dbReference>
<dbReference type="Pfam" id="PF02403">
    <property type="entry name" value="Seryl_tRNA_N"/>
    <property type="match status" value="1"/>
</dbReference>
<dbReference type="Pfam" id="PF00587">
    <property type="entry name" value="tRNA-synt_2b"/>
    <property type="match status" value="1"/>
</dbReference>
<dbReference type="PIRSF" id="PIRSF001529">
    <property type="entry name" value="Ser-tRNA-synth_IIa"/>
    <property type="match status" value="1"/>
</dbReference>
<dbReference type="PRINTS" id="PR00981">
    <property type="entry name" value="TRNASYNTHSER"/>
</dbReference>
<dbReference type="SUPFAM" id="SSF55681">
    <property type="entry name" value="Class II aaRS and biotin synthetases"/>
    <property type="match status" value="1"/>
</dbReference>
<dbReference type="SUPFAM" id="SSF46589">
    <property type="entry name" value="tRNA-binding arm"/>
    <property type="match status" value="1"/>
</dbReference>
<dbReference type="PROSITE" id="PS50862">
    <property type="entry name" value="AA_TRNA_LIGASE_II"/>
    <property type="match status" value="1"/>
</dbReference>
<organism>
    <name type="scientific">Rhodospirillum centenum (strain ATCC 51521 / SW)</name>
    <dbReference type="NCBI Taxonomy" id="414684"/>
    <lineage>
        <taxon>Bacteria</taxon>
        <taxon>Pseudomonadati</taxon>
        <taxon>Pseudomonadota</taxon>
        <taxon>Alphaproteobacteria</taxon>
        <taxon>Rhodospirillales</taxon>
        <taxon>Rhodospirillaceae</taxon>
        <taxon>Rhodospirillum</taxon>
    </lineage>
</organism>